<proteinExistence type="inferred from homology"/>
<reference key="1">
    <citation type="journal article" date="2010" name="J. Bacteriol.">
        <title>Genome sequence of the dioxin-mineralizing bacterium Sphingomonas wittichii RW1.</title>
        <authorList>
            <person name="Miller T.R."/>
            <person name="Delcher A.L."/>
            <person name="Salzberg S.L."/>
            <person name="Saunders E."/>
            <person name="Detter J.C."/>
            <person name="Halden R.U."/>
        </authorList>
    </citation>
    <scope>NUCLEOTIDE SEQUENCE [LARGE SCALE GENOMIC DNA]</scope>
    <source>
        <strain>DSM 6014 / CCUG 31198 / JCM 15750 / NBRC 105917 / EY 4224 / RW1</strain>
    </source>
</reference>
<name>PDRP_RHIWR</name>
<comment type="function">
    <text evidence="1">Bifunctional serine/threonine kinase and phosphorylase involved in the regulation of the pyruvate, phosphate dikinase (PPDK) by catalyzing its phosphorylation/dephosphorylation.</text>
</comment>
<comment type="catalytic activity">
    <reaction evidence="1">
        <text>N(tele)-phospho-L-histidyl/L-threonyl-[pyruvate, phosphate dikinase] + ADP = N(tele)-phospho-L-histidyl/O-phospho-L-threonyl-[pyruvate, phosphate dikinase] + AMP + H(+)</text>
        <dbReference type="Rhea" id="RHEA:43692"/>
        <dbReference type="Rhea" id="RHEA-COMP:10650"/>
        <dbReference type="Rhea" id="RHEA-COMP:10651"/>
        <dbReference type="ChEBI" id="CHEBI:15378"/>
        <dbReference type="ChEBI" id="CHEBI:30013"/>
        <dbReference type="ChEBI" id="CHEBI:61977"/>
        <dbReference type="ChEBI" id="CHEBI:83586"/>
        <dbReference type="ChEBI" id="CHEBI:456215"/>
        <dbReference type="ChEBI" id="CHEBI:456216"/>
        <dbReference type="EC" id="2.7.11.32"/>
    </reaction>
</comment>
<comment type="catalytic activity">
    <reaction evidence="1">
        <text>N(tele)-phospho-L-histidyl/O-phospho-L-threonyl-[pyruvate, phosphate dikinase] + phosphate + H(+) = N(tele)-phospho-L-histidyl/L-threonyl-[pyruvate, phosphate dikinase] + diphosphate</text>
        <dbReference type="Rhea" id="RHEA:43696"/>
        <dbReference type="Rhea" id="RHEA-COMP:10650"/>
        <dbReference type="Rhea" id="RHEA-COMP:10651"/>
        <dbReference type="ChEBI" id="CHEBI:15378"/>
        <dbReference type="ChEBI" id="CHEBI:30013"/>
        <dbReference type="ChEBI" id="CHEBI:33019"/>
        <dbReference type="ChEBI" id="CHEBI:43474"/>
        <dbReference type="ChEBI" id="CHEBI:61977"/>
        <dbReference type="ChEBI" id="CHEBI:83586"/>
        <dbReference type="EC" id="2.7.4.27"/>
    </reaction>
</comment>
<comment type="similarity">
    <text evidence="1">Belongs to the pyruvate, phosphate/water dikinase regulatory protein family. PDRP subfamily.</text>
</comment>
<dbReference type="EC" id="2.7.11.32" evidence="1"/>
<dbReference type="EC" id="2.7.4.27" evidence="1"/>
<dbReference type="EMBL" id="CP000699">
    <property type="protein sequence ID" value="ABQ69185.1"/>
    <property type="molecule type" value="Genomic_DNA"/>
</dbReference>
<dbReference type="SMR" id="A5VA69"/>
<dbReference type="STRING" id="392499.Swit_2832"/>
<dbReference type="PaxDb" id="392499-Swit_2832"/>
<dbReference type="KEGG" id="swi:Swit_2832"/>
<dbReference type="eggNOG" id="COG1806">
    <property type="taxonomic scope" value="Bacteria"/>
</dbReference>
<dbReference type="HOGENOM" id="CLU_046206_2_0_5"/>
<dbReference type="OrthoDB" id="9782201at2"/>
<dbReference type="Proteomes" id="UP000001989">
    <property type="component" value="Chromosome"/>
</dbReference>
<dbReference type="GO" id="GO:0043531">
    <property type="term" value="F:ADP binding"/>
    <property type="evidence" value="ECO:0007669"/>
    <property type="project" value="UniProtKB-UniRule"/>
</dbReference>
<dbReference type="GO" id="GO:0005524">
    <property type="term" value="F:ATP binding"/>
    <property type="evidence" value="ECO:0007669"/>
    <property type="project" value="InterPro"/>
</dbReference>
<dbReference type="GO" id="GO:0016776">
    <property type="term" value="F:phosphotransferase activity, phosphate group as acceptor"/>
    <property type="evidence" value="ECO:0007669"/>
    <property type="project" value="UniProtKB-UniRule"/>
</dbReference>
<dbReference type="GO" id="GO:0004674">
    <property type="term" value="F:protein serine/threonine kinase activity"/>
    <property type="evidence" value="ECO:0007669"/>
    <property type="project" value="UniProtKB-UniRule"/>
</dbReference>
<dbReference type="HAMAP" id="MF_00921">
    <property type="entry name" value="PDRP"/>
    <property type="match status" value="1"/>
</dbReference>
<dbReference type="InterPro" id="IPR005177">
    <property type="entry name" value="Kinase-pyrophosphorylase"/>
</dbReference>
<dbReference type="InterPro" id="IPR026565">
    <property type="entry name" value="PPDK_reg"/>
</dbReference>
<dbReference type="NCBIfam" id="NF003742">
    <property type="entry name" value="PRK05339.1"/>
    <property type="match status" value="1"/>
</dbReference>
<dbReference type="PANTHER" id="PTHR31756">
    <property type="entry name" value="PYRUVATE, PHOSPHATE DIKINASE REGULATORY PROTEIN 1, CHLOROPLASTIC"/>
    <property type="match status" value="1"/>
</dbReference>
<dbReference type="PANTHER" id="PTHR31756:SF3">
    <property type="entry name" value="PYRUVATE, PHOSPHATE DIKINASE REGULATORY PROTEIN 1, CHLOROPLASTIC"/>
    <property type="match status" value="1"/>
</dbReference>
<dbReference type="Pfam" id="PF03618">
    <property type="entry name" value="Kinase-PPPase"/>
    <property type="match status" value="1"/>
</dbReference>
<sequence length="274" mass="30459">MIRLHLHLLSDSTGETLENIAKAGLAQFEGVETIKHFWPMVRSQGHLDRILLEIAQRPGLVIFTLVNNDIRTRLESRCHALGLPSVSALDPVIDALSQLLGQQALARPGRQHILDAAYYARVEAIQYTIAHDDGIASEDWEEADIVLTGVSRSSKTPTSIYLANRGYKVANVPLVVESPPPPSFYSLVHPLIVGLTTSPERLVQIRRNRLLSLNQSPETAYVDHERVAAELSFARRIFSDHGWPVIDVTRRSIEETAAAIINLVNERSAKEEAK</sequence>
<accession>A5VA69</accession>
<keyword id="KW-0418">Kinase</keyword>
<keyword id="KW-0547">Nucleotide-binding</keyword>
<keyword id="KW-1185">Reference proteome</keyword>
<keyword id="KW-0723">Serine/threonine-protein kinase</keyword>
<keyword id="KW-0808">Transferase</keyword>
<feature type="chain" id="PRO_1000073011" description="Putative pyruvate, phosphate dikinase regulatory protein">
    <location>
        <begin position="1"/>
        <end position="274"/>
    </location>
</feature>
<feature type="binding site" evidence="1">
    <location>
        <begin position="149"/>
        <end position="156"/>
    </location>
    <ligand>
        <name>ADP</name>
        <dbReference type="ChEBI" id="CHEBI:456216"/>
    </ligand>
</feature>
<evidence type="ECO:0000255" key="1">
    <source>
        <dbReference type="HAMAP-Rule" id="MF_00921"/>
    </source>
</evidence>
<protein>
    <recommendedName>
        <fullName evidence="1">Putative pyruvate, phosphate dikinase regulatory protein</fullName>
        <shortName evidence="1">PPDK regulatory protein</shortName>
        <ecNumber evidence="1">2.7.11.32</ecNumber>
        <ecNumber evidence="1">2.7.4.27</ecNumber>
    </recommendedName>
</protein>
<gene>
    <name type="ordered locus">Swit_2832</name>
</gene>
<organism>
    <name type="scientific">Rhizorhabdus wittichii (strain DSM 6014 / CCUG 31198 / JCM 15750 / NBRC 105917 / EY 4224 / RW1)</name>
    <name type="common">Sphingomonas wittichii</name>
    <dbReference type="NCBI Taxonomy" id="392499"/>
    <lineage>
        <taxon>Bacteria</taxon>
        <taxon>Pseudomonadati</taxon>
        <taxon>Pseudomonadota</taxon>
        <taxon>Alphaproteobacteria</taxon>
        <taxon>Sphingomonadales</taxon>
        <taxon>Sphingomonadaceae</taxon>
        <taxon>Rhizorhabdus</taxon>
    </lineage>
</organism>